<evidence type="ECO:0000255" key="1">
    <source>
        <dbReference type="HAMAP-Rule" id="MF_00501"/>
    </source>
</evidence>
<evidence type="ECO:0000305" key="2"/>
<sequence length="68" mass="7703">MKEKIHPKYNTATNVICACGNTFTVGSTKDNIKVELCAQCHPFYTGEKRMVDTAGRVEKFRQRYGSKT</sequence>
<feature type="chain" id="PRO_0000259181" description="Large ribosomal subunit protein bL31">
    <location>
        <begin position="1"/>
        <end position="68"/>
    </location>
</feature>
<feature type="binding site" evidence="1">
    <location>
        <position position="17"/>
    </location>
    <ligand>
        <name>Zn(2+)</name>
        <dbReference type="ChEBI" id="CHEBI:29105"/>
    </ligand>
</feature>
<feature type="binding site" evidence="1">
    <location>
        <position position="19"/>
    </location>
    <ligand>
        <name>Zn(2+)</name>
        <dbReference type="ChEBI" id="CHEBI:29105"/>
    </ligand>
</feature>
<feature type="binding site" evidence="1">
    <location>
        <position position="37"/>
    </location>
    <ligand>
        <name>Zn(2+)</name>
        <dbReference type="ChEBI" id="CHEBI:29105"/>
    </ligand>
</feature>
<feature type="binding site" evidence="1">
    <location>
        <position position="40"/>
    </location>
    <ligand>
        <name>Zn(2+)</name>
        <dbReference type="ChEBI" id="CHEBI:29105"/>
    </ligand>
</feature>
<comment type="function">
    <text evidence="1">Binds the 23S rRNA.</text>
</comment>
<comment type="cofactor">
    <cofactor evidence="1">
        <name>Zn(2+)</name>
        <dbReference type="ChEBI" id="CHEBI:29105"/>
    </cofactor>
    <text evidence="1">Binds 1 zinc ion per subunit.</text>
</comment>
<comment type="subunit">
    <text evidence="1">Part of the 50S ribosomal subunit.</text>
</comment>
<comment type="similarity">
    <text evidence="1">Belongs to the bacterial ribosomal protein bL31 family. Type A subfamily.</text>
</comment>
<keyword id="KW-0479">Metal-binding</keyword>
<keyword id="KW-0687">Ribonucleoprotein</keyword>
<keyword id="KW-0689">Ribosomal protein</keyword>
<keyword id="KW-0694">RNA-binding</keyword>
<keyword id="KW-0699">rRNA-binding</keyword>
<keyword id="KW-0862">Zinc</keyword>
<proteinExistence type="inferred from homology"/>
<reference key="1">
    <citation type="journal article" date="2005" name="Nat. Biotechnol.">
        <title>Genome sequence of the chlorinated compound-respiring bacterium Dehalococcoides species strain CBDB1.</title>
        <authorList>
            <person name="Kube M."/>
            <person name="Beck A."/>
            <person name="Zinder S.H."/>
            <person name="Kuhl H."/>
            <person name="Reinhardt R."/>
            <person name="Adrian L."/>
        </authorList>
    </citation>
    <scope>NUCLEOTIDE SEQUENCE [LARGE SCALE GENOMIC DNA]</scope>
    <source>
        <strain>CBDB1</strain>
    </source>
</reference>
<protein>
    <recommendedName>
        <fullName evidence="1">Large ribosomal subunit protein bL31</fullName>
    </recommendedName>
    <alternativeName>
        <fullName evidence="2">50S ribosomal protein L31</fullName>
    </alternativeName>
</protein>
<name>RL31_DEHMC</name>
<dbReference type="EMBL" id="AJ965256">
    <property type="protein sequence ID" value="CAI83334.1"/>
    <property type="molecule type" value="Genomic_DNA"/>
</dbReference>
<dbReference type="RefSeq" id="WP_011309685.1">
    <property type="nucleotide sequence ID" value="NC_007356.1"/>
</dbReference>
<dbReference type="SMR" id="Q3ZYN3"/>
<dbReference type="KEGG" id="deh:cbdbA1272"/>
<dbReference type="HOGENOM" id="CLU_114306_4_3_0"/>
<dbReference type="Proteomes" id="UP000000433">
    <property type="component" value="Chromosome"/>
</dbReference>
<dbReference type="GO" id="GO:1990904">
    <property type="term" value="C:ribonucleoprotein complex"/>
    <property type="evidence" value="ECO:0007669"/>
    <property type="project" value="UniProtKB-KW"/>
</dbReference>
<dbReference type="GO" id="GO:0005840">
    <property type="term" value="C:ribosome"/>
    <property type="evidence" value="ECO:0007669"/>
    <property type="project" value="UniProtKB-KW"/>
</dbReference>
<dbReference type="GO" id="GO:0046872">
    <property type="term" value="F:metal ion binding"/>
    <property type="evidence" value="ECO:0007669"/>
    <property type="project" value="UniProtKB-KW"/>
</dbReference>
<dbReference type="GO" id="GO:0019843">
    <property type="term" value="F:rRNA binding"/>
    <property type="evidence" value="ECO:0007669"/>
    <property type="project" value="UniProtKB-KW"/>
</dbReference>
<dbReference type="GO" id="GO:0003735">
    <property type="term" value="F:structural constituent of ribosome"/>
    <property type="evidence" value="ECO:0007669"/>
    <property type="project" value="InterPro"/>
</dbReference>
<dbReference type="GO" id="GO:0006412">
    <property type="term" value="P:translation"/>
    <property type="evidence" value="ECO:0007669"/>
    <property type="project" value="UniProtKB-UniRule"/>
</dbReference>
<dbReference type="Gene3D" id="4.10.830.30">
    <property type="entry name" value="Ribosomal protein L31"/>
    <property type="match status" value="1"/>
</dbReference>
<dbReference type="HAMAP" id="MF_00501">
    <property type="entry name" value="Ribosomal_bL31_1"/>
    <property type="match status" value="1"/>
</dbReference>
<dbReference type="InterPro" id="IPR034704">
    <property type="entry name" value="Ribosomal_bL28/bL31-like_sf"/>
</dbReference>
<dbReference type="InterPro" id="IPR002150">
    <property type="entry name" value="Ribosomal_bL31"/>
</dbReference>
<dbReference type="InterPro" id="IPR027491">
    <property type="entry name" value="Ribosomal_bL31_A"/>
</dbReference>
<dbReference type="InterPro" id="IPR042105">
    <property type="entry name" value="Ribosomal_bL31_sf"/>
</dbReference>
<dbReference type="NCBIfam" id="TIGR00105">
    <property type="entry name" value="L31"/>
    <property type="match status" value="1"/>
</dbReference>
<dbReference type="NCBIfam" id="NF000612">
    <property type="entry name" value="PRK00019.1"/>
    <property type="match status" value="1"/>
</dbReference>
<dbReference type="NCBIfam" id="NF001809">
    <property type="entry name" value="PRK00528.1"/>
    <property type="match status" value="1"/>
</dbReference>
<dbReference type="PANTHER" id="PTHR33280">
    <property type="entry name" value="50S RIBOSOMAL PROTEIN L31, CHLOROPLASTIC"/>
    <property type="match status" value="1"/>
</dbReference>
<dbReference type="PANTHER" id="PTHR33280:SF1">
    <property type="entry name" value="LARGE RIBOSOMAL SUBUNIT PROTEIN BL31C"/>
    <property type="match status" value="1"/>
</dbReference>
<dbReference type="Pfam" id="PF01197">
    <property type="entry name" value="Ribosomal_L31"/>
    <property type="match status" value="1"/>
</dbReference>
<dbReference type="PRINTS" id="PR01249">
    <property type="entry name" value="RIBOSOMALL31"/>
</dbReference>
<dbReference type="SUPFAM" id="SSF143800">
    <property type="entry name" value="L28p-like"/>
    <property type="match status" value="1"/>
</dbReference>
<organism>
    <name type="scientific">Dehalococcoides mccartyi (strain CBDB1)</name>
    <dbReference type="NCBI Taxonomy" id="255470"/>
    <lineage>
        <taxon>Bacteria</taxon>
        <taxon>Bacillati</taxon>
        <taxon>Chloroflexota</taxon>
        <taxon>Dehalococcoidia</taxon>
        <taxon>Dehalococcoidales</taxon>
        <taxon>Dehalococcoidaceae</taxon>
        <taxon>Dehalococcoides</taxon>
    </lineage>
</organism>
<accession>Q3ZYN3</accession>
<gene>
    <name evidence="1" type="primary">rpmE</name>
    <name type="ordered locus">cbdbA1272</name>
</gene>